<dbReference type="EMBL" id="AK142813">
    <property type="protein sequence ID" value="BAE25199.1"/>
    <property type="molecule type" value="mRNA"/>
</dbReference>
<dbReference type="EMBL" id="AK147360">
    <property type="status" value="NOT_ANNOTATED_CDS"/>
    <property type="molecule type" value="mRNA"/>
</dbReference>
<dbReference type="CCDS" id="CCDS36753.1"/>
<dbReference type="RefSeq" id="NP_081987.1">
    <property type="nucleotide sequence ID" value="NM_027711.1"/>
</dbReference>
<dbReference type="SMR" id="Q3UQ44"/>
<dbReference type="BioGRID" id="243818">
    <property type="interactions" value="12"/>
</dbReference>
<dbReference type="FunCoup" id="Q3UQ44">
    <property type="interactions" value="576"/>
</dbReference>
<dbReference type="IntAct" id="Q3UQ44">
    <property type="interactions" value="5"/>
</dbReference>
<dbReference type="MINT" id="Q3UQ44"/>
<dbReference type="STRING" id="10090.ENSMUSP00000067685"/>
<dbReference type="GlyGen" id="Q3UQ44">
    <property type="glycosylation" value="1 site, 1 O-linked glycan (1 site)"/>
</dbReference>
<dbReference type="iPTMnet" id="Q3UQ44"/>
<dbReference type="PhosphoSitePlus" id="Q3UQ44"/>
<dbReference type="SwissPalm" id="Q3UQ44"/>
<dbReference type="jPOST" id="Q3UQ44"/>
<dbReference type="PaxDb" id="10090-ENSMUSP00000067685"/>
<dbReference type="PeptideAtlas" id="Q3UQ44"/>
<dbReference type="ProteomicsDB" id="269504"/>
<dbReference type="Antibodypedia" id="3789">
    <property type="antibodies" value="207 antibodies from 34 providers"/>
</dbReference>
<dbReference type="Ensembl" id="ENSMUST00000068603.8">
    <property type="protein sequence ID" value="ENSMUSP00000067685.7"/>
    <property type="gene ID" value="ENSMUSG00000021676.11"/>
</dbReference>
<dbReference type="GeneID" id="544963"/>
<dbReference type="KEGG" id="mmu:544963"/>
<dbReference type="UCSC" id="uc007rmo.1">
    <property type="organism name" value="mouse"/>
</dbReference>
<dbReference type="AGR" id="MGI:2449975"/>
<dbReference type="CTD" id="10788"/>
<dbReference type="MGI" id="MGI:2449975">
    <property type="gene designation" value="Iqgap2"/>
</dbReference>
<dbReference type="VEuPathDB" id="HostDB:ENSMUSG00000021676"/>
<dbReference type="eggNOG" id="KOG2128">
    <property type="taxonomic scope" value="Eukaryota"/>
</dbReference>
<dbReference type="GeneTree" id="ENSGT00950000183076"/>
<dbReference type="HOGENOM" id="CLU_000972_2_1_1"/>
<dbReference type="InParanoid" id="Q3UQ44"/>
<dbReference type="OMA" id="CANKYYD"/>
<dbReference type="OrthoDB" id="775356at2759"/>
<dbReference type="PhylomeDB" id="Q3UQ44"/>
<dbReference type="TreeFam" id="TF313078"/>
<dbReference type="Reactome" id="R-MMU-5626467">
    <property type="pathway name" value="RHO GTPases activate IQGAPs"/>
</dbReference>
<dbReference type="Reactome" id="R-MMU-6798695">
    <property type="pathway name" value="Neutrophil degranulation"/>
</dbReference>
<dbReference type="Reactome" id="R-MMU-9013149">
    <property type="pathway name" value="RAC1 GTPase cycle"/>
</dbReference>
<dbReference type="Reactome" id="R-MMU-9013408">
    <property type="pathway name" value="RHOG GTPase cycle"/>
</dbReference>
<dbReference type="BioGRID-ORCS" id="544963">
    <property type="hits" value="3 hits in 76 CRISPR screens"/>
</dbReference>
<dbReference type="ChiTaRS" id="Iqgap2">
    <property type="organism name" value="mouse"/>
</dbReference>
<dbReference type="PRO" id="PR:Q3UQ44"/>
<dbReference type="Proteomes" id="UP000000589">
    <property type="component" value="Chromosome 13"/>
</dbReference>
<dbReference type="RNAct" id="Q3UQ44">
    <property type="molecule type" value="protein"/>
</dbReference>
<dbReference type="Bgee" id="ENSMUSG00000021676">
    <property type="expression patterns" value="Expressed in ciliary body and 252 other cell types or tissues"/>
</dbReference>
<dbReference type="GO" id="GO:0009986">
    <property type="term" value="C:cell surface"/>
    <property type="evidence" value="ECO:0007669"/>
    <property type="project" value="Ensembl"/>
</dbReference>
<dbReference type="GO" id="GO:0005737">
    <property type="term" value="C:cytoplasm"/>
    <property type="evidence" value="ECO:0007669"/>
    <property type="project" value="Ensembl"/>
</dbReference>
<dbReference type="GO" id="GO:0030175">
    <property type="term" value="C:filopodium"/>
    <property type="evidence" value="ECO:0007669"/>
    <property type="project" value="Ensembl"/>
</dbReference>
<dbReference type="GO" id="GO:0030027">
    <property type="term" value="C:lamellipodium"/>
    <property type="evidence" value="ECO:0007669"/>
    <property type="project" value="Ensembl"/>
</dbReference>
<dbReference type="GO" id="GO:0005902">
    <property type="term" value="C:microvillus"/>
    <property type="evidence" value="ECO:0000314"/>
    <property type="project" value="MGI"/>
</dbReference>
<dbReference type="GO" id="GO:0051015">
    <property type="term" value="F:actin filament binding"/>
    <property type="evidence" value="ECO:0007669"/>
    <property type="project" value="Ensembl"/>
</dbReference>
<dbReference type="GO" id="GO:0071933">
    <property type="term" value="F:Arp2/3 complex binding"/>
    <property type="evidence" value="ECO:0007669"/>
    <property type="project" value="Ensembl"/>
</dbReference>
<dbReference type="GO" id="GO:0005516">
    <property type="term" value="F:calmodulin binding"/>
    <property type="evidence" value="ECO:0007669"/>
    <property type="project" value="UniProtKB-KW"/>
</dbReference>
<dbReference type="GO" id="GO:0005547">
    <property type="term" value="F:phosphatidylinositol-3,4,5-trisphosphate binding"/>
    <property type="evidence" value="ECO:0000250"/>
    <property type="project" value="UniProtKB"/>
</dbReference>
<dbReference type="GO" id="GO:0031267">
    <property type="term" value="F:small GTPase binding"/>
    <property type="evidence" value="ECO:0007669"/>
    <property type="project" value="Ensembl"/>
</dbReference>
<dbReference type="GO" id="GO:0034314">
    <property type="term" value="P:Arp2/3 complex-mediated actin nucleation"/>
    <property type="evidence" value="ECO:0007669"/>
    <property type="project" value="Ensembl"/>
</dbReference>
<dbReference type="GO" id="GO:0032956">
    <property type="term" value="P:regulation of actin cytoskeleton organization"/>
    <property type="evidence" value="ECO:0007669"/>
    <property type="project" value="Ensembl"/>
</dbReference>
<dbReference type="GO" id="GO:0070493">
    <property type="term" value="P:thrombin-activated receptor signaling pathway"/>
    <property type="evidence" value="ECO:0007669"/>
    <property type="project" value="Ensembl"/>
</dbReference>
<dbReference type="CDD" id="cd21275">
    <property type="entry name" value="CH_IQGAP2"/>
    <property type="match status" value="1"/>
</dbReference>
<dbReference type="CDD" id="cd05131">
    <property type="entry name" value="RasGAP_IQGAP2"/>
    <property type="match status" value="1"/>
</dbReference>
<dbReference type="FunFam" id="1.10.418.10:FF:000013">
    <property type="entry name" value="IQ motif containing GTPase activating protein 1"/>
    <property type="match status" value="1"/>
</dbReference>
<dbReference type="FunFam" id="1.10.506.10:FF:000004">
    <property type="entry name" value="IQ motif containing GTPase activating protein 1"/>
    <property type="match status" value="1"/>
</dbReference>
<dbReference type="Gene3D" id="1.20.5.190">
    <property type="match status" value="1"/>
</dbReference>
<dbReference type="Gene3D" id="1.10.418.10">
    <property type="entry name" value="Calponin-like domain"/>
    <property type="match status" value="1"/>
</dbReference>
<dbReference type="Gene3D" id="1.10.506.10">
    <property type="entry name" value="GTPase Activation - p120gap, domain 1"/>
    <property type="match status" value="1"/>
</dbReference>
<dbReference type="InterPro" id="IPR001715">
    <property type="entry name" value="CH_dom"/>
</dbReference>
<dbReference type="InterPro" id="IPR036872">
    <property type="entry name" value="CH_dom_sf"/>
</dbReference>
<dbReference type="InterPro" id="IPR000048">
    <property type="entry name" value="IQ_motif_EF-hand-BS"/>
</dbReference>
<dbReference type="InterPro" id="IPR000593">
    <property type="entry name" value="RasGAP_C"/>
</dbReference>
<dbReference type="InterPro" id="IPR023152">
    <property type="entry name" value="RasGAP_CS"/>
</dbReference>
<dbReference type="InterPro" id="IPR001936">
    <property type="entry name" value="RasGAP_dom"/>
</dbReference>
<dbReference type="InterPro" id="IPR008936">
    <property type="entry name" value="Rho_GTPase_activation_prot"/>
</dbReference>
<dbReference type="InterPro" id="IPR001202">
    <property type="entry name" value="WW_dom"/>
</dbReference>
<dbReference type="PANTHER" id="PTHR14149">
    <property type="entry name" value="RAS GTPASE-ACTIVATING PROTEIN WITH IQ MOTIF"/>
    <property type="match status" value="1"/>
</dbReference>
<dbReference type="PANTHER" id="PTHR14149:SF12">
    <property type="entry name" value="RAS GTPASE-ACTIVATING-LIKE PROTEIN IQGAP2"/>
    <property type="match status" value="1"/>
</dbReference>
<dbReference type="Pfam" id="PF00307">
    <property type="entry name" value="CH"/>
    <property type="match status" value="1"/>
</dbReference>
<dbReference type="Pfam" id="PF00612">
    <property type="entry name" value="IQ"/>
    <property type="match status" value="2"/>
</dbReference>
<dbReference type="Pfam" id="PF00616">
    <property type="entry name" value="RasGAP"/>
    <property type="match status" value="1"/>
</dbReference>
<dbReference type="Pfam" id="PF03836">
    <property type="entry name" value="RasGAP_C"/>
    <property type="match status" value="1"/>
</dbReference>
<dbReference type="SMART" id="SM00033">
    <property type="entry name" value="CH"/>
    <property type="match status" value="1"/>
</dbReference>
<dbReference type="SMART" id="SM00015">
    <property type="entry name" value="IQ"/>
    <property type="match status" value="3"/>
</dbReference>
<dbReference type="SMART" id="SM00323">
    <property type="entry name" value="RasGAP"/>
    <property type="match status" value="1"/>
</dbReference>
<dbReference type="SUPFAM" id="SSF47576">
    <property type="entry name" value="Calponin-homology domain, CH-domain"/>
    <property type="match status" value="1"/>
</dbReference>
<dbReference type="SUPFAM" id="SSF48350">
    <property type="entry name" value="GTPase activation domain, GAP"/>
    <property type="match status" value="1"/>
</dbReference>
<dbReference type="SUPFAM" id="SSF143885">
    <property type="entry name" value="RGC domain-like"/>
    <property type="match status" value="1"/>
</dbReference>
<dbReference type="PROSITE" id="PS50021">
    <property type="entry name" value="CH"/>
    <property type="match status" value="1"/>
</dbReference>
<dbReference type="PROSITE" id="PS50096">
    <property type="entry name" value="IQ"/>
    <property type="match status" value="3"/>
</dbReference>
<dbReference type="PROSITE" id="PS00509">
    <property type="entry name" value="RAS_GTPASE_ACTIV_1"/>
    <property type="match status" value="1"/>
</dbReference>
<dbReference type="PROSITE" id="PS50018">
    <property type="entry name" value="RAS_GTPASE_ACTIV_2"/>
    <property type="match status" value="1"/>
</dbReference>
<dbReference type="PROSITE" id="PS01159">
    <property type="entry name" value="WW_DOMAIN_1"/>
    <property type="match status" value="1"/>
</dbReference>
<dbReference type="PROSITE" id="PS50020">
    <property type="entry name" value="WW_DOMAIN_2"/>
    <property type="match status" value="1"/>
</dbReference>
<evidence type="ECO:0000250" key="1">
    <source>
        <dbReference type="UniProtKB" id="Q13576"/>
    </source>
</evidence>
<evidence type="ECO:0000255" key="2">
    <source>
        <dbReference type="PROSITE-ProRule" id="PRU00044"/>
    </source>
</evidence>
<evidence type="ECO:0000255" key="3">
    <source>
        <dbReference type="PROSITE-ProRule" id="PRU00116"/>
    </source>
</evidence>
<evidence type="ECO:0000255" key="4">
    <source>
        <dbReference type="PROSITE-ProRule" id="PRU00167"/>
    </source>
</evidence>
<evidence type="ECO:0000255" key="5">
    <source>
        <dbReference type="PROSITE-ProRule" id="PRU00224"/>
    </source>
</evidence>
<evidence type="ECO:0000305" key="6"/>
<evidence type="ECO:0007744" key="7">
    <source>
    </source>
</evidence>
<evidence type="ECO:0007744" key="8">
    <source>
    </source>
</evidence>
<reference key="1">
    <citation type="journal article" date="2005" name="Science">
        <title>The transcriptional landscape of the mammalian genome.</title>
        <authorList>
            <person name="Carninci P."/>
            <person name="Kasukawa T."/>
            <person name="Katayama S."/>
            <person name="Gough J."/>
            <person name="Frith M.C."/>
            <person name="Maeda N."/>
            <person name="Oyama R."/>
            <person name="Ravasi T."/>
            <person name="Lenhard B."/>
            <person name="Wells C."/>
            <person name="Kodzius R."/>
            <person name="Shimokawa K."/>
            <person name="Bajic V.B."/>
            <person name="Brenner S.E."/>
            <person name="Batalov S."/>
            <person name="Forrest A.R."/>
            <person name="Zavolan M."/>
            <person name="Davis M.J."/>
            <person name="Wilming L.G."/>
            <person name="Aidinis V."/>
            <person name="Allen J.E."/>
            <person name="Ambesi-Impiombato A."/>
            <person name="Apweiler R."/>
            <person name="Aturaliya R.N."/>
            <person name="Bailey T.L."/>
            <person name="Bansal M."/>
            <person name="Baxter L."/>
            <person name="Beisel K.W."/>
            <person name="Bersano T."/>
            <person name="Bono H."/>
            <person name="Chalk A.M."/>
            <person name="Chiu K.P."/>
            <person name="Choudhary V."/>
            <person name="Christoffels A."/>
            <person name="Clutterbuck D.R."/>
            <person name="Crowe M.L."/>
            <person name="Dalla E."/>
            <person name="Dalrymple B.P."/>
            <person name="de Bono B."/>
            <person name="Della Gatta G."/>
            <person name="di Bernardo D."/>
            <person name="Down T."/>
            <person name="Engstrom P."/>
            <person name="Fagiolini M."/>
            <person name="Faulkner G."/>
            <person name="Fletcher C.F."/>
            <person name="Fukushima T."/>
            <person name="Furuno M."/>
            <person name="Futaki S."/>
            <person name="Gariboldi M."/>
            <person name="Georgii-Hemming P."/>
            <person name="Gingeras T.R."/>
            <person name="Gojobori T."/>
            <person name="Green R.E."/>
            <person name="Gustincich S."/>
            <person name="Harbers M."/>
            <person name="Hayashi Y."/>
            <person name="Hensch T.K."/>
            <person name="Hirokawa N."/>
            <person name="Hill D."/>
            <person name="Huminiecki L."/>
            <person name="Iacono M."/>
            <person name="Ikeo K."/>
            <person name="Iwama A."/>
            <person name="Ishikawa T."/>
            <person name="Jakt M."/>
            <person name="Kanapin A."/>
            <person name="Katoh M."/>
            <person name="Kawasawa Y."/>
            <person name="Kelso J."/>
            <person name="Kitamura H."/>
            <person name="Kitano H."/>
            <person name="Kollias G."/>
            <person name="Krishnan S.P."/>
            <person name="Kruger A."/>
            <person name="Kummerfeld S.K."/>
            <person name="Kurochkin I.V."/>
            <person name="Lareau L.F."/>
            <person name="Lazarevic D."/>
            <person name="Lipovich L."/>
            <person name="Liu J."/>
            <person name="Liuni S."/>
            <person name="McWilliam S."/>
            <person name="Madan Babu M."/>
            <person name="Madera M."/>
            <person name="Marchionni L."/>
            <person name="Matsuda H."/>
            <person name="Matsuzawa S."/>
            <person name="Miki H."/>
            <person name="Mignone F."/>
            <person name="Miyake S."/>
            <person name="Morris K."/>
            <person name="Mottagui-Tabar S."/>
            <person name="Mulder N."/>
            <person name="Nakano N."/>
            <person name="Nakauchi H."/>
            <person name="Ng P."/>
            <person name="Nilsson R."/>
            <person name="Nishiguchi S."/>
            <person name="Nishikawa S."/>
            <person name="Nori F."/>
            <person name="Ohara O."/>
            <person name="Okazaki Y."/>
            <person name="Orlando V."/>
            <person name="Pang K.C."/>
            <person name="Pavan W.J."/>
            <person name="Pavesi G."/>
            <person name="Pesole G."/>
            <person name="Petrovsky N."/>
            <person name="Piazza S."/>
            <person name="Reed J."/>
            <person name="Reid J.F."/>
            <person name="Ring B.Z."/>
            <person name="Ringwald M."/>
            <person name="Rost B."/>
            <person name="Ruan Y."/>
            <person name="Salzberg S.L."/>
            <person name="Sandelin A."/>
            <person name="Schneider C."/>
            <person name="Schoenbach C."/>
            <person name="Sekiguchi K."/>
            <person name="Semple C.A."/>
            <person name="Seno S."/>
            <person name="Sessa L."/>
            <person name="Sheng Y."/>
            <person name="Shibata Y."/>
            <person name="Shimada H."/>
            <person name="Shimada K."/>
            <person name="Silva D."/>
            <person name="Sinclair B."/>
            <person name="Sperling S."/>
            <person name="Stupka E."/>
            <person name="Sugiura K."/>
            <person name="Sultana R."/>
            <person name="Takenaka Y."/>
            <person name="Taki K."/>
            <person name="Tammoja K."/>
            <person name="Tan S.L."/>
            <person name="Tang S."/>
            <person name="Taylor M.S."/>
            <person name="Tegner J."/>
            <person name="Teichmann S.A."/>
            <person name="Ueda H.R."/>
            <person name="van Nimwegen E."/>
            <person name="Verardo R."/>
            <person name="Wei C.L."/>
            <person name="Yagi K."/>
            <person name="Yamanishi H."/>
            <person name="Zabarovsky E."/>
            <person name="Zhu S."/>
            <person name="Zimmer A."/>
            <person name="Hide W."/>
            <person name="Bult C."/>
            <person name="Grimmond S.M."/>
            <person name="Teasdale R.D."/>
            <person name="Liu E.T."/>
            <person name="Brusic V."/>
            <person name="Quackenbush J."/>
            <person name="Wahlestedt C."/>
            <person name="Mattick J.S."/>
            <person name="Hume D.A."/>
            <person name="Kai C."/>
            <person name="Sasaki D."/>
            <person name="Tomaru Y."/>
            <person name="Fukuda S."/>
            <person name="Kanamori-Katayama M."/>
            <person name="Suzuki M."/>
            <person name="Aoki J."/>
            <person name="Arakawa T."/>
            <person name="Iida J."/>
            <person name="Imamura K."/>
            <person name="Itoh M."/>
            <person name="Kato T."/>
            <person name="Kawaji H."/>
            <person name="Kawagashira N."/>
            <person name="Kawashima T."/>
            <person name="Kojima M."/>
            <person name="Kondo S."/>
            <person name="Konno H."/>
            <person name="Nakano K."/>
            <person name="Ninomiya N."/>
            <person name="Nishio T."/>
            <person name="Okada M."/>
            <person name="Plessy C."/>
            <person name="Shibata K."/>
            <person name="Shiraki T."/>
            <person name="Suzuki S."/>
            <person name="Tagami M."/>
            <person name="Waki K."/>
            <person name="Watahiki A."/>
            <person name="Okamura-Oho Y."/>
            <person name="Suzuki H."/>
            <person name="Kawai J."/>
            <person name="Hayashizaki Y."/>
        </authorList>
    </citation>
    <scope>NUCLEOTIDE SEQUENCE [LARGE SCALE MRNA]</scope>
    <source>
        <strain>C57BL/6J</strain>
        <tissue>Head</tissue>
    </source>
</reference>
<reference key="2">
    <citation type="journal article" date="2007" name="Proc. Natl. Acad. Sci. U.S.A.">
        <title>Large-scale phosphorylation analysis of mouse liver.</title>
        <authorList>
            <person name="Villen J."/>
            <person name="Beausoleil S.A."/>
            <person name="Gerber S.A."/>
            <person name="Gygi S.P."/>
        </authorList>
    </citation>
    <scope>PHOSPHORYLATION [LARGE SCALE ANALYSIS] AT SER-16</scope>
    <scope>IDENTIFICATION BY MASS SPECTROMETRY [LARGE SCALE ANALYSIS]</scope>
    <source>
        <tissue>Liver</tissue>
    </source>
</reference>
<reference key="3">
    <citation type="journal article" date="2008" name="J. Proteome Res.">
        <title>Specific phosphopeptide enrichment with immobilized titanium ion affinity chromatography adsorbent for phosphoproteome analysis.</title>
        <authorList>
            <person name="Zhou H."/>
            <person name="Ye M."/>
            <person name="Dong J."/>
            <person name="Han G."/>
            <person name="Jiang X."/>
            <person name="Wu R."/>
            <person name="Zou H."/>
        </authorList>
    </citation>
    <scope>IDENTIFICATION BY MASS SPECTROMETRY [LARGE SCALE ANALYSIS]</scope>
    <source>
        <tissue>Liver</tissue>
    </source>
</reference>
<reference key="4">
    <citation type="journal article" date="2010" name="Cell">
        <title>A tissue-specific atlas of mouse protein phosphorylation and expression.</title>
        <authorList>
            <person name="Huttlin E.L."/>
            <person name="Jedrychowski M.P."/>
            <person name="Elias J.E."/>
            <person name="Goswami T."/>
            <person name="Rad R."/>
            <person name="Beausoleil S.A."/>
            <person name="Villen J."/>
            <person name="Haas W."/>
            <person name="Sowa M.E."/>
            <person name="Gygi S.P."/>
        </authorList>
    </citation>
    <scope>PHOSPHORYLATION [LARGE SCALE ANALYSIS] AT SER-16 AND THR-881</scope>
    <scope>IDENTIFICATION BY MASS SPECTROMETRY [LARGE SCALE ANALYSIS]</scope>
    <source>
        <tissue>Brain</tissue>
        <tissue>Brown adipose tissue</tissue>
        <tissue>Heart</tissue>
        <tissue>Kidney</tissue>
        <tissue>Liver</tissue>
        <tissue>Lung</tissue>
        <tissue>Pancreas</tissue>
        <tissue>Spleen</tissue>
        <tissue>Testis</tissue>
    </source>
</reference>
<name>IQGA2_MOUSE</name>
<sequence>MPHEELPSLQRPRYGSIVDDERLSAEEMDERRRQNIAYEYLCHLEEAKRWMEVCLVEELPPTTELEEGLRNGVYLAKLAKFFAPKMVSEKKIYDVEQTRYKKSGLHFRHTDNTVQWLRAMEAIGLPKIFYPETTDVYDRKNIPRMIYCIHALSLYLFKLGIAPQIQDLLGKVDFTEEEISNMRKELEKYGIQMPAFSKIGGILANELSVDEAALHAAVIAINEAIEKGVAKQTIITLRNPNAVLTCVDDSLSQEYQKELWEAKKKKEESAKLKNSCISEEERDAYEELLTQAEIQSNISTVNRMAAVDHINAVLQEGDPENTLLALKKPEAQLPAVYPFAAVMYQNELFNLQKQNTSNYLAHEELLIAVEMLSAVALLNQALESSDLVAVQNQLRSPTIGFNNLDEAHVDRYADALLSVKQEALSQGQDTLSWNEIQNCIDMINNQIQEENDRMVVLGYINEAIDAGNPLKTLDTLLLPTANIRDVDPDCAQHYQDVLFYTKSQKLGDPKNVSKVLWLDEIQQAINEANVDENRAKQWVTLVVDVNECLDRKQSDHILTALKSSPSNIHNILPECANKYYDTLVKAKESKTDNESSEGSWVTLNVQEKYNYYYNTDSKEGSWVPPELCLSKESWLTGEEIEDIVEEVTSDYIREKLWSASEDLLVRFEATTLGPALREEFEARKAFLYEQTESVVKIQAFWKGFKQRQEYLHRQQVFAGNVDSVVKIQSWFRMVTARKSYLSRLRYFEDHKNEIVKIQSLLRASKARDDYKALVGSENPPLTVIRKFVYLLDQSDLDFQEELEVARLREEVVTKIRANQQLEKDLNLMDIKIGLLVKNRITLEDVISHRKKLNKKKGGEIEILNNTDNKGIKSLSKERRKTLETYQQLFYLLQTKPSYLAKLIFQMPQNKSTKFMDTVIFTLYNYASNQREEYLLLKLFKTALEEEIKSKVDQVQDIVTGNPTVIKMVVSFNRGARGQNTLRQLLAPVVKEIIEDKALVINTNPVEVYKAWVNQLETQTGEASKLPYDVTTEQALTYPEVKNKLEASIENLRKVTDKVLGSIISSLDLLPYGLRYIAKVLKNSIREKFPDATEEELLKIVGNLLYYRYMNPAIVAPDGFDIIDMTAGGQINSNQRRNLGSVAKVLQHAASNKLFEGENEHLSSMNNYLSETYQEFRKYFQEACDVPEPEEKFNMDKYTDLVTVSKPVIYISIEEIINTHLLLLEHQDAIATEKSDLLNELLESLGEVPTVESFLGEGAVDPNDPNKENTLNQLSKTEISLSLTSKYDVKDGEAVDGRSLMIKTKKLIIDVTRNQPGSTLTEILETPATGQQELEHAKDMESRAVVDSRTPEEGKQSQAVIEDARLPLEQKKRKIQRNLRTLEQTGHVSSKNKYQDILNEIAKDIRNQRIHRKLRKAELSKLQQTLNALNKKAAFYEDQINYYDTYIKTCVDNLKRKNSRRSIKLDGKAEPKGTKRVKPVRYTAAKLHDKGVLLGIDDLQTNQFKNVMFDIIATEDMGIFDVRSKFLGVEMEKVQLNIQDLLQMQYEGVAVMKMFDKVKVNVNLLIYLLNKKFYGK</sequence>
<organism>
    <name type="scientific">Mus musculus</name>
    <name type="common">Mouse</name>
    <dbReference type="NCBI Taxonomy" id="10090"/>
    <lineage>
        <taxon>Eukaryota</taxon>
        <taxon>Metazoa</taxon>
        <taxon>Chordata</taxon>
        <taxon>Craniata</taxon>
        <taxon>Vertebrata</taxon>
        <taxon>Euteleostomi</taxon>
        <taxon>Mammalia</taxon>
        <taxon>Eutheria</taxon>
        <taxon>Euarchontoglires</taxon>
        <taxon>Glires</taxon>
        <taxon>Rodentia</taxon>
        <taxon>Myomorpha</taxon>
        <taxon>Muroidea</taxon>
        <taxon>Muridae</taxon>
        <taxon>Murinae</taxon>
        <taxon>Mus</taxon>
        <taxon>Mus</taxon>
    </lineage>
</organism>
<protein>
    <recommendedName>
        <fullName>Ras GTPase-activating-like protein IQGAP2</fullName>
    </recommendedName>
</protein>
<proteinExistence type="evidence at protein level"/>
<comment type="function">
    <text>Binds to activated CDC42 and RAC1 but does not seem to stimulate their GTPase activity. Associates with calmodulin.</text>
</comment>
<comment type="sequence caution" evidence="6">
    <conflict type="frameshift">
        <sequence resource="EMBL" id="AK147360"/>
    </conflict>
</comment>
<gene>
    <name type="primary">Iqgap2</name>
</gene>
<keyword id="KW-0112">Calmodulin-binding</keyword>
<keyword id="KW-0597">Phosphoprotein</keyword>
<keyword id="KW-1185">Reference proteome</keyword>
<keyword id="KW-0677">Repeat</keyword>
<accession>Q3UQ44</accession>
<feature type="chain" id="PRO_0000354074" description="Ras GTPase-activating-like protein IQGAP2">
    <location>
        <begin position="1"/>
        <end position="1575"/>
    </location>
</feature>
<feature type="domain" description="Calponin-homology (CH)" evidence="2">
    <location>
        <begin position="41"/>
        <end position="156"/>
    </location>
</feature>
<feature type="domain" description="WW" evidence="5">
    <location>
        <begin position="594"/>
        <end position="627"/>
    </location>
</feature>
<feature type="domain" description="IQ 1" evidence="3">
    <location>
        <begin position="690"/>
        <end position="719"/>
    </location>
</feature>
<feature type="domain" description="IQ 2" evidence="3">
    <location>
        <begin position="720"/>
        <end position="749"/>
    </location>
</feature>
<feature type="domain" description="IQ 3" evidence="3">
    <location>
        <begin position="750"/>
        <end position="779"/>
    </location>
</feature>
<feature type="domain" description="Ras-GAP" evidence="4">
    <location>
        <begin position="933"/>
        <end position="1182"/>
    </location>
</feature>
<feature type="modified residue" description="Phosphoserine" evidence="7 8">
    <location>
        <position position="16"/>
    </location>
</feature>
<feature type="modified residue" description="Phosphothreonine" evidence="1">
    <location>
        <position position="356"/>
    </location>
</feature>
<feature type="modified residue" description="Phosphoserine" evidence="1">
    <location>
        <position position="595"/>
    </location>
</feature>
<feature type="modified residue" description="Phosphoserine" evidence="1">
    <location>
        <position position="599"/>
    </location>
</feature>
<feature type="modified residue" description="Phosphothreonine" evidence="1">
    <location>
        <position position="782"/>
    </location>
</feature>
<feature type="modified residue" description="Phosphothreonine" evidence="8">
    <location>
        <position position="881"/>
    </location>
</feature>
<feature type="modified residue" description="Phosphothreonine" evidence="1">
    <location>
        <position position="1002"/>
    </location>
</feature>
<feature type="modified residue" description="Phosphothreonine" evidence="1">
    <location>
        <position position="1269"/>
    </location>
</feature>
<feature type="modified residue" description="Phosphoserine" evidence="1">
    <location>
        <position position="1279"/>
    </location>
</feature>
<feature type="modified residue" description="Phosphoserine" evidence="1">
    <location>
        <position position="1461"/>
    </location>
</feature>
<feature type="sequence conflict" description="In Ref. 1; BAE25199." evidence="6" ref="1">
    <original>K</original>
    <variation>R</variation>
    <location>
        <position position="1275"/>
    </location>
</feature>
<feature type="sequence conflict" description="In Ref. 1; BAE25199." evidence="6" ref="1">
    <original>K</original>
    <variation>E</variation>
    <location>
        <position position="1447"/>
    </location>
</feature>